<feature type="chain" id="PRO_0000065483" description="Uncharacterized protein T26G10.5">
    <location>
        <begin position="1"/>
        <end position="84"/>
    </location>
</feature>
<protein>
    <recommendedName>
        <fullName>Uncharacterized protein T26G10.5</fullName>
    </recommendedName>
</protein>
<keyword id="KW-1185">Reference proteome</keyword>
<dbReference type="EMBL" id="BX284603">
    <property type="protein sequence ID" value="CAA82364.2"/>
    <property type="molecule type" value="Genomic_DNA"/>
</dbReference>
<dbReference type="PIR" id="S40734">
    <property type="entry name" value="S40734"/>
</dbReference>
<dbReference type="RefSeq" id="NP_001366678.1">
    <property type="nucleotide sequence ID" value="NM_001379860.1"/>
</dbReference>
<dbReference type="RefSeq" id="NP_499072.1">
    <property type="nucleotide sequence ID" value="NM_066671.1"/>
</dbReference>
<dbReference type="FunCoup" id="P34584">
    <property type="interactions" value="1522"/>
</dbReference>
<dbReference type="PaxDb" id="6239-T26G10.5"/>
<dbReference type="EnsemblMetazoa" id="T26G10.5.1">
    <property type="protein sequence ID" value="T26G10.5.1"/>
    <property type="gene ID" value="WBGene00012062"/>
</dbReference>
<dbReference type="GeneID" id="188945"/>
<dbReference type="UCSC" id="T26G10.5">
    <property type="organism name" value="c. elegans"/>
</dbReference>
<dbReference type="AGR" id="WB:WBGene00012062"/>
<dbReference type="WormBase" id="T26G10.5">
    <property type="protein sequence ID" value="CE54196"/>
    <property type="gene ID" value="WBGene00012062"/>
</dbReference>
<dbReference type="eggNOG" id="ENOG502THYX">
    <property type="taxonomic scope" value="Eukaryota"/>
</dbReference>
<dbReference type="HOGENOM" id="CLU_162889_0_0_1"/>
<dbReference type="InParanoid" id="P34584"/>
<dbReference type="OrthoDB" id="5775649at2759"/>
<dbReference type="PRO" id="PR:P34584"/>
<dbReference type="Proteomes" id="UP000001940">
    <property type="component" value="Chromosome III"/>
</dbReference>
<dbReference type="Bgee" id="WBGene00012062">
    <property type="expression patterns" value="Expressed in larva and 3 other cell types or tissues"/>
</dbReference>
<accession>P34584</accession>
<name>YN25_CAEEL</name>
<gene>
    <name evidence="1" type="ORF">T26G10.5</name>
</gene>
<reference key="1">
    <citation type="journal article" date="1994" name="Nature">
        <title>2.2 Mb of contiguous nucleotide sequence from chromosome III of C. elegans.</title>
        <authorList>
            <person name="Wilson R."/>
            <person name="Ainscough R."/>
            <person name="Anderson K."/>
            <person name="Baynes C."/>
            <person name="Berks M."/>
            <person name="Bonfield J."/>
            <person name="Burton J."/>
            <person name="Connell M."/>
            <person name="Copsey T."/>
            <person name="Cooper J."/>
            <person name="Coulson A."/>
            <person name="Craxton M."/>
            <person name="Dear S."/>
            <person name="Du Z."/>
            <person name="Durbin R."/>
            <person name="Favello A."/>
            <person name="Fraser A."/>
            <person name="Fulton L."/>
            <person name="Gardner A."/>
            <person name="Green P."/>
            <person name="Hawkins T."/>
            <person name="Hillier L."/>
            <person name="Jier M."/>
            <person name="Johnston L."/>
            <person name="Jones M."/>
            <person name="Kershaw J."/>
            <person name="Kirsten J."/>
            <person name="Laisster N."/>
            <person name="Latreille P."/>
            <person name="Lightning J."/>
            <person name="Lloyd C."/>
            <person name="Mortimore B."/>
            <person name="O'Callaghan M."/>
            <person name="Parsons J."/>
            <person name="Percy C."/>
            <person name="Rifken L."/>
            <person name="Roopra A."/>
            <person name="Saunders D."/>
            <person name="Shownkeen R."/>
            <person name="Sims M."/>
            <person name="Smaldon N."/>
            <person name="Smith A."/>
            <person name="Smith M."/>
            <person name="Sonnhammer E."/>
            <person name="Staden R."/>
            <person name="Sulston J."/>
            <person name="Thierry-Mieg J."/>
            <person name="Thomas K."/>
            <person name="Vaudin M."/>
            <person name="Vaughan K."/>
            <person name="Waterston R."/>
            <person name="Watson A."/>
            <person name="Weinstock L."/>
            <person name="Wilkinson-Sproat J."/>
            <person name="Wohldman P."/>
        </authorList>
    </citation>
    <scope>NUCLEOTIDE SEQUENCE [LARGE SCALE GENOMIC DNA]</scope>
    <source>
        <strain>Bristol N2</strain>
    </source>
</reference>
<reference key="2">
    <citation type="journal article" date="1998" name="Science">
        <title>Genome sequence of the nematode C. elegans: a platform for investigating biology.</title>
        <authorList>
            <consortium name="The C. elegans sequencing consortium"/>
        </authorList>
    </citation>
    <scope>NUCLEOTIDE SEQUENCE [LARGE SCALE GENOMIC DNA]</scope>
    <source>
        <strain>Bristol N2</strain>
    </source>
</reference>
<proteinExistence type="predicted"/>
<sequence length="84" mass="9971">MMFRLFLLISFIVLCHSIVSEISHRFLHRDPEYEGRVYYEPLYTSKDFRLGGSAQLSPLYEMTNSHLLNLADLLRKRTETQTPY</sequence>
<organism>
    <name type="scientific">Caenorhabditis elegans</name>
    <dbReference type="NCBI Taxonomy" id="6239"/>
    <lineage>
        <taxon>Eukaryota</taxon>
        <taxon>Metazoa</taxon>
        <taxon>Ecdysozoa</taxon>
        <taxon>Nematoda</taxon>
        <taxon>Chromadorea</taxon>
        <taxon>Rhabditida</taxon>
        <taxon>Rhabditina</taxon>
        <taxon>Rhabditomorpha</taxon>
        <taxon>Rhabditoidea</taxon>
        <taxon>Rhabditidae</taxon>
        <taxon>Peloderinae</taxon>
        <taxon>Caenorhabditis</taxon>
    </lineage>
</organism>
<evidence type="ECO:0000312" key="1">
    <source>
        <dbReference type="WormBase" id="T26G10.5"/>
    </source>
</evidence>